<reference key="1">
    <citation type="journal article" date="2012" name="BMC Genomics">
        <title>The venom-gland transcriptome of the eastern diamondback rattlesnake (Crotalus adamanteus).</title>
        <authorList>
            <person name="Rokyta D.R."/>
            <person name="Lemmon A.R."/>
            <person name="Margres M.J."/>
            <person name="Aronow K."/>
        </authorList>
    </citation>
    <scope>NUCLEOTIDE SEQUENCE [MRNA]</scope>
    <source>
        <tissue>Venom gland</tissue>
    </source>
</reference>
<proteinExistence type="evidence at transcript level"/>
<sequence>MWRLIIIAILFQGLVNSAMLERRKRGVDPETAMNISEIILFRGYPSEEYEVVTGDGYILCLNRIPYGKISQKTKEPKPAVFLQHGLLADGSNWVTNLDYNSLGFALADAGFDVWLGNSRGNTWSQKHINYTIKQKEFWMFSFNEMAMYDIPASVNFVLNKTGQEQLFYVGHSQGTTIGFIAFSVLPELAKKIKMFFGLAPVMTVKFSSGGLVKLGELPEFLLKEIFGTKQIFPQNAVIKWLATHVCGQVLIDELCGNFFFLLCGFNEKNLNMSRVEIYSTHCPAGTSVQNMLHWSQAVKSGEVRAFDWGSRKENMAHYKQPTPPPYKMERMLVPTALWTGGHDWLSDRKDIAILLTLIPNLIYHKEIPEWEHLDFIWGLDAPQRMFRDMIQMMHKVQYAH</sequence>
<feature type="signal peptide" evidence="2">
    <location>
        <begin position="1"/>
        <end position="17"/>
    </location>
</feature>
<feature type="chain" id="PRO_0000422920" description="Putative lysosomal acid lipase/cholesteryl ester hydrolase">
    <location>
        <begin position="18"/>
        <end position="400"/>
    </location>
</feature>
<feature type="domain" description="AB hydrolase-1" evidence="2">
    <location>
        <begin position="78"/>
        <end position="378"/>
    </location>
</feature>
<feature type="active site" description="Charge relay system" evidence="3">
    <location>
        <position position="172"/>
    </location>
</feature>
<feature type="active site" description="Charge relay system" evidence="3">
    <location>
        <position position="372"/>
    </location>
</feature>
<feature type="glycosylation site" description="N-linked (GlcNAc...) asparagine" evidence="2">
    <location>
        <position position="34"/>
    </location>
</feature>
<feature type="glycosylation site" description="N-linked (GlcNAc...) asparagine" evidence="2">
    <location>
        <position position="129"/>
    </location>
</feature>
<feature type="glycosylation site" description="N-linked (GlcNAc...) asparagine" evidence="2">
    <location>
        <position position="159"/>
    </location>
</feature>
<feature type="glycosylation site" description="N-linked (GlcNAc...) asparagine" evidence="2">
    <location>
        <position position="271"/>
    </location>
</feature>
<comment type="function">
    <text>In physiological conditions, is crucial for intracellular hydrolysis of cholesteryl esters and triglycerides that have been internalized via receptor-mediated endocytosis of lipoprotein particles. In venom, the biological contribution is unknown.</text>
</comment>
<comment type="catalytic activity">
    <reaction>
        <text>a sterol ester + H2O = a sterol + a fatty acid + H(+)</text>
        <dbReference type="Rhea" id="RHEA:10100"/>
        <dbReference type="ChEBI" id="CHEBI:15377"/>
        <dbReference type="ChEBI" id="CHEBI:15378"/>
        <dbReference type="ChEBI" id="CHEBI:15889"/>
        <dbReference type="ChEBI" id="CHEBI:28868"/>
        <dbReference type="ChEBI" id="CHEBI:35915"/>
        <dbReference type="EC" id="3.1.1.13"/>
    </reaction>
</comment>
<comment type="subcellular location">
    <subcellularLocation>
        <location evidence="1">Secreted</location>
    </subcellularLocation>
</comment>
<comment type="tissue specificity">
    <text>Expressed by the venom gland.</text>
</comment>
<comment type="similarity">
    <text evidence="4">Belongs to the AB hydrolase superfamily. Lipase family.</text>
</comment>
<protein>
    <recommendedName>
        <fullName>Putative lysosomal acid lipase/cholesteryl ester hydrolase</fullName>
        <shortName>Acid cholesteryl ester hydrolase</shortName>
        <shortName>LAL</shortName>
        <ecNumber>3.1.1.13</ecNumber>
    </recommendedName>
    <alternativeName>
        <fullName>Cholesteryl esterase</fullName>
    </alternativeName>
    <alternativeName>
        <fullName>Lipase A</fullName>
    </alternativeName>
    <alternativeName>
        <fullName>Sterol esterase</fullName>
    </alternativeName>
</protein>
<keyword id="KW-0325">Glycoprotein</keyword>
<keyword id="KW-0378">Hydrolase</keyword>
<keyword id="KW-0442">Lipid degradation</keyword>
<keyword id="KW-0443">Lipid metabolism</keyword>
<keyword id="KW-0964">Secreted</keyword>
<keyword id="KW-0732">Signal</keyword>
<name>LICH_CROAD</name>
<dbReference type="EC" id="3.1.1.13"/>
<dbReference type="EMBL" id="JU173770">
    <property type="protein sequence ID" value="AFJ49296.1"/>
    <property type="molecule type" value="mRNA"/>
</dbReference>
<dbReference type="SMR" id="J3SDX8"/>
<dbReference type="ESTHER" id="croad-lich">
    <property type="family name" value="Acidic_Lipase"/>
</dbReference>
<dbReference type="GO" id="GO:0005576">
    <property type="term" value="C:extracellular region"/>
    <property type="evidence" value="ECO:0007669"/>
    <property type="project" value="UniProtKB-SubCell"/>
</dbReference>
<dbReference type="GO" id="GO:0004771">
    <property type="term" value="F:sterol ester esterase activity"/>
    <property type="evidence" value="ECO:0007669"/>
    <property type="project" value="UniProtKB-EC"/>
</dbReference>
<dbReference type="GO" id="GO:0016042">
    <property type="term" value="P:lipid catabolic process"/>
    <property type="evidence" value="ECO:0007669"/>
    <property type="project" value="UniProtKB-KW"/>
</dbReference>
<dbReference type="FunFam" id="3.40.50.1820:FF:000012">
    <property type="entry name" value="Lipase"/>
    <property type="match status" value="1"/>
</dbReference>
<dbReference type="Gene3D" id="3.40.50.1820">
    <property type="entry name" value="alpha/beta hydrolase"/>
    <property type="match status" value="1"/>
</dbReference>
<dbReference type="InterPro" id="IPR000073">
    <property type="entry name" value="AB_hydrolase_1"/>
</dbReference>
<dbReference type="InterPro" id="IPR029058">
    <property type="entry name" value="AB_hydrolase_fold"/>
</dbReference>
<dbReference type="InterPro" id="IPR025483">
    <property type="entry name" value="Lipase_euk"/>
</dbReference>
<dbReference type="PANTHER" id="PTHR11005">
    <property type="entry name" value="LYSOSOMAL ACID LIPASE-RELATED"/>
    <property type="match status" value="1"/>
</dbReference>
<dbReference type="Pfam" id="PF00561">
    <property type="entry name" value="Abhydrolase_1"/>
    <property type="match status" value="1"/>
</dbReference>
<dbReference type="PIRSF" id="PIRSF000862">
    <property type="entry name" value="Steryl_ester_lip"/>
    <property type="match status" value="1"/>
</dbReference>
<dbReference type="SUPFAM" id="SSF53474">
    <property type="entry name" value="alpha/beta-Hydrolases"/>
    <property type="match status" value="1"/>
</dbReference>
<dbReference type="PROSITE" id="PS00120">
    <property type="entry name" value="LIPASE_SER"/>
    <property type="match status" value="1"/>
</dbReference>
<evidence type="ECO:0000250" key="1"/>
<evidence type="ECO:0000255" key="2"/>
<evidence type="ECO:0000255" key="3">
    <source>
        <dbReference type="PROSITE-ProRule" id="PRU10037"/>
    </source>
</evidence>
<evidence type="ECO:0000305" key="4"/>
<organism>
    <name type="scientific">Crotalus adamanteus</name>
    <name type="common">Eastern diamondback rattlesnake</name>
    <dbReference type="NCBI Taxonomy" id="8729"/>
    <lineage>
        <taxon>Eukaryota</taxon>
        <taxon>Metazoa</taxon>
        <taxon>Chordata</taxon>
        <taxon>Craniata</taxon>
        <taxon>Vertebrata</taxon>
        <taxon>Euteleostomi</taxon>
        <taxon>Lepidosauria</taxon>
        <taxon>Squamata</taxon>
        <taxon>Bifurcata</taxon>
        <taxon>Unidentata</taxon>
        <taxon>Episquamata</taxon>
        <taxon>Toxicofera</taxon>
        <taxon>Serpentes</taxon>
        <taxon>Colubroidea</taxon>
        <taxon>Viperidae</taxon>
        <taxon>Crotalinae</taxon>
        <taxon>Crotalus</taxon>
    </lineage>
</organism>
<accession>J3SDX8</accession>